<dbReference type="EMBL" id="AM180355">
    <property type="protein sequence ID" value="CAJ68030.1"/>
    <property type="molecule type" value="Genomic_DNA"/>
</dbReference>
<dbReference type="RefSeq" id="WP_003419113.1">
    <property type="nucleotide sequence ID" value="NZ_JAUPES010000024.1"/>
</dbReference>
<dbReference type="RefSeq" id="YP_001087669.1">
    <property type="nucleotide sequence ID" value="NC_009089.1"/>
</dbReference>
<dbReference type="SMR" id="Q18B38"/>
<dbReference type="STRING" id="272563.CD630_11761"/>
<dbReference type="EnsemblBacteria" id="CAJ68030">
    <property type="protein sequence ID" value="CAJ68030"/>
    <property type="gene ID" value="CD630_11761"/>
</dbReference>
<dbReference type="GeneID" id="66353587"/>
<dbReference type="KEGG" id="cdf:CD630_11761"/>
<dbReference type="KEGG" id="pdc:CDIF630_01325"/>
<dbReference type="PATRIC" id="fig|272563.120.peg.1227"/>
<dbReference type="eggNOG" id="COG0333">
    <property type="taxonomic scope" value="Bacteria"/>
</dbReference>
<dbReference type="OrthoDB" id="9812874at2"/>
<dbReference type="PhylomeDB" id="Q18B38"/>
<dbReference type="BioCyc" id="PDIF272563:G12WB-1307-MONOMER"/>
<dbReference type="Proteomes" id="UP000001978">
    <property type="component" value="Chromosome"/>
</dbReference>
<dbReference type="GO" id="GO:0015934">
    <property type="term" value="C:large ribosomal subunit"/>
    <property type="evidence" value="ECO:0007669"/>
    <property type="project" value="InterPro"/>
</dbReference>
<dbReference type="GO" id="GO:0003735">
    <property type="term" value="F:structural constituent of ribosome"/>
    <property type="evidence" value="ECO:0007669"/>
    <property type="project" value="InterPro"/>
</dbReference>
<dbReference type="GO" id="GO:0006412">
    <property type="term" value="P:translation"/>
    <property type="evidence" value="ECO:0007669"/>
    <property type="project" value="UniProtKB-UniRule"/>
</dbReference>
<dbReference type="HAMAP" id="MF_00340">
    <property type="entry name" value="Ribosomal_bL32"/>
    <property type="match status" value="1"/>
</dbReference>
<dbReference type="InterPro" id="IPR002677">
    <property type="entry name" value="Ribosomal_bL32"/>
</dbReference>
<dbReference type="InterPro" id="IPR044957">
    <property type="entry name" value="Ribosomal_bL32_bact"/>
</dbReference>
<dbReference type="InterPro" id="IPR011332">
    <property type="entry name" value="Ribosomal_zn-bd"/>
</dbReference>
<dbReference type="NCBIfam" id="TIGR01031">
    <property type="entry name" value="rpmF_bact"/>
    <property type="match status" value="1"/>
</dbReference>
<dbReference type="PANTHER" id="PTHR35534">
    <property type="entry name" value="50S RIBOSOMAL PROTEIN L32"/>
    <property type="match status" value="1"/>
</dbReference>
<dbReference type="PANTHER" id="PTHR35534:SF1">
    <property type="entry name" value="LARGE RIBOSOMAL SUBUNIT PROTEIN BL32"/>
    <property type="match status" value="1"/>
</dbReference>
<dbReference type="Pfam" id="PF01783">
    <property type="entry name" value="Ribosomal_L32p"/>
    <property type="match status" value="1"/>
</dbReference>
<dbReference type="SUPFAM" id="SSF57829">
    <property type="entry name" value="Zn-binding ribosomal proteins"/>
    <property type="match status" value="1"/>
</dbReference>
<reference key="1">
    <citation type="journal article" date="2006" name="Nat. Genet.">
        <title>The multidrug-resistant human pathogen Clostridium difficile has a highly mobile, mosaic genome.</title>
        <authorList>
            <person name="Sebaihia M."/>
            <person name="Wren B.W."/>
            <person name="Mullany P."/>
            <person name="Fairweather N.F."/>
            <person name="Minton N."/>
            <person name="Stabler R."/>
            <person name="Thomson N.R."/>
            <person name="Roberts A.P."/>
            <person name="Cerdeno-Tarraga A.M."/>
            <person name="Wang H."/>
            <person name="Holden M.T.G."/>
            <person name="Wright A."/>
            <person name="Churcher C."/>
            <person name="Quail M.A."/>
            <person name="Baker S."/>
            <person name="Bason N."/>
            <person name="Brooks K."/>
            <person name="Chillingworth T."/>
            <person name="Cronin A."/>
            <person name="Davis P."/>
            <person name="Dowd L."/>
            <person name="Fraser A."/>
            <person name="Feltwell T."/>
            <person name="Hance Z."/>
            <person name="Holroyd S."/>
            <person name="Jagels K."/>
            <person name="Moule S."/>
            <person name="Mungall K."/>
            <person name="Price C."/>
            <person name="Rabbinowitsch E."/>
            <person name="Sharp S."/>
            <person name="Simmonds M."/>
            <person name="Stevens K."/>
            <person name="Unwin L."/>
            <person name="Whithead S."/>
            <person name="Dupuy B."/>
            <person name="Dougan G."/>
            <person name="Barrell B."/>
            <person name="Parkhill J."/>
        </authorList>
    </citation>
    <scope>NUCLEOTIDE SEQUENCE [LARGE SCALE GENOMIC DNA]</scope>
    <source>
        <strain>630</strain>
    </source>
</reference>
<proteinExistence type="inferred from homology"/>
<organism>
    <name type="scientific">Clostridioides difficile (strain 630)</name>
    <name type="common">Peptoclostridium difficile</name>
    <dbReference type="NCBI Taxonomy" id="272563"/>
    <lineage>
        <taxon>Bacteria</taxon>
        <taxon>Bacillati</taxon>
        <taxon>Bacillota</taxon>
        <taxon>Clostridia</taxon>
        <taxon>Peptostreptococcales</taxon>
        <taxon>Peptostreptococcaceae</taxon>
        <taxon>Clostridioides</taxon>
    </lineage>
</organism>
<sequence>MAVPKRKTSKSNTKMRRAANSKMEATGFVSCPQCHEPKLPHRVCPDCGYYKGKEVVSK</sequence>
<accession>Q18B38</accession>
<name>RL32_CLOD6</name>
<evidence type="ECO:0000255" key="1">
    <source>
        <dbReference type="HAMAP-Rule" id="MF_00340"/>
    </source>
</evidence>
<evidence type="ECO:0000256" key="2">
    <source>
        <dbReference type="SAM" id="MobiDB-lite"/>
    </source>
</evidence>
<evidence type="ECO:0000305" key="3"/>
<comment type="similarity">
    <text evidence="1">Belongs to the bacterial ribosomal protein bL32 family.</text>
</comment>
<keyword id="KW-1185">Reference proteome</keyword>
<keyword id="KW-0687">Ribonucleoprotein</keyword>
<keyword id="KW-0689">Ribosomal protein</keyword>
<gene>
    <name evidence="1" type="primary">rpmF</name>
    <name type="ordered locus">CD630_11761</name>
    <name type="ORF">CD1176A</name>
</gene>
<feature type="chain" id="PRO_0000296447" description="Large ribosomal subunit protein bL32">
    <location>
        <begin position="1"/>
        <end position="58"/>
    </location>
</feature>
<feature type="region of interest" description="Disordered" evidence="2">
    <location>
        <begin position="1"/>
        <end position="22"/>
    </location>
</feature>
<feature type="compositionally biased region" description="Basic residues" evidence="2">
    <location>
        <begin position="1"/>
        <end position="19"/>
    </location>
</feature>
<protein>
    <recommendedName>
        <fullName evidence="1">Large ribosomal subunit protein bL32</fullName>
    </recommendedName>
    <alternativeName>
        <fullName evidence="3">50S ribosomal protein L32</fullName>
    </alternativeName>
</protein>